<accession>B1JU31</accession>
<evidence type="ECO:0000255" key="1">
    <source>
        <dbReference type="HAMAP-Rule" id="MF_01345"/>
    </source>
</evidence>
<evidence type="ECO:0000305" key="2"/>
<dbReference type="EMBL" id="CP000958">
    <property type="protein sequence ID" value="ACA89516.1"/>
    <property type="molecule type" value="Genomic_DNA"/>
</dbReference>
<dbReference type="RefSeq" id="WP_006477189.1">
    <property type="nucleotide sequence ID" value="NC_010508.1"/>
</dbReference>
<dbReference type="SMR" id="B1JU31"/>
<dbReference type="GeneID" id="93193442"/>
<dbReference type="KEGG" id="bcm:Bcenmc03_0336"/>
<dbReference type="HOGENOM" id="CLU_073626_1_1_4"/>
<dbReference type="Proteomes" id="UP000002169">
    <property type="component" value="Chromosome 1"/>
</dbReference>
<dbReference type="GO" id="GO:0022627">
    <property type="term" value="C:cytosolic small ribosomal subunit"/>
    <property type="evidence" value="ECO:0007669"/>
    <property type="project" value="TreeGrafter"/>
</dbReference>
<dbReference type="GO" id="GO:0019843">
    <property type="term" value="F:rRNA binding"/>
    <property type="evidence" value="ECO:0007669"/>
    <property type="project" value="UniProtKB-UniRule"/>
</dbReference>
<dbReference type="GO" id="GO:0003735">
    <property type="term" value="F:structural constituent of ribosome"/>
    <property type="evidence" value="ECO:0007669"/>
    <property type="project" value="InterPro"/>
</dbReference>
<dbReference type="GO" id="GO:0006412">
    <property type="term" value="P:translation"/>
    <property type="evidence" value="ECO:0007669"/>
    <property type="project" value="UniProtKB-UniRule"/>
</dbReference>
<dbReference type="CDD" id="cd00364">
    <property type="entry name" value="Ribosomal_uS17"/>
    <property type="match status" value="1"/>
</dbReference>
<dbReference type="Gene3D" id="2.40.50.140">
    <property type="entry name" value="Nucleic acid-binding proteins"/>
    <property type="match status" value="1"/>
</dbReference>
<dbReference type="HAMAP" id="MF_01345_B">
    <property type="entry name" value="Ribosomal_uS17_B"/>
    <property type="match status" value="1"/>
</dbReference>
<dbReference type="InterPro" id="IPR012340">
    <property type="entry name" value="NA-bd_OB-fold"/>
</dbReference>
<dbReference type="InterPro" id="IPR000266">
    <property type="entry name" value="Ribosomal_uS17"/>
</dbReference>
<dbReference type="InterPro" id="IPR019984">
    <property type="entry name" value="Ribosomal_uS17_bact/chlr"/>
</dbReference>
<dbReference type="InterPro" id="IPR019979">
    <property type="entry name" value="Ribosomal_uS17_CS"/>
</dbReference>
<dbReference type="NCBIfam" id="NF004123">
    <property type="entry name" value="PRK05610.1"/>
    <property type="match status" value="1"/>
</dbReference>
<dbReference type="NCBIfam" id="TIGR03635">
    <property type="entry name" value="uS17_bact"/>
    <property type="match status" value="1"/>
</dbReference>
<dbReference type="PANTHER" id="PTHR10744">
    <property type="entry name" value="40S RIBOSOMAL PROTEIN S11 FAMILY MEMBER"/>
    <property type="match status" value="1"/>
</dbReference>
<dbReference type="PANTHER" id="PTHR10744:SF1">
    <property type="entry name" value="SMALL RIBOSOMAL SUBUNIT PROTEIN US17M"/>
    <property type="match status" value="1"/>
</dbReference>
<dbReference type="Pfam" id="PF00366">
    <property type="entry name" value="Ribosomal_S17"/>
    <property type="match status" value="1"/>
</dbReference>
<dbReference type="PRINTS" id="PR00973">
    <property type="entry name" value="RIBOSOMALS17"/>
</dbReference>
<dbReference type="SUPFAM" id="SSF50249">
    <property type="entry name" value="Nucleic acid-binding proteins"/>
    <property type="match status" value="1"/>
</dbReference>
<dbReference type="PROSITE" id="PS00056">
    <property type="entry name" value="RIBOSOMAL_S17"/>
    <property type="match status" value="1"/>
</dbReference>
<proteinExistence type="inferred from homology"/>
<organism>
    <name type="scientific">Burkholderia orbicola (strain MC0-3)</name>
    <dbReference type="NCBI Taxonomy" id="406425"/>
    <lineage>
        <taxon>Bacteria</taxon>
        <taxon>Pseudomonadati</taxon>
        <taxon>Pseudomonadota</taxon>
        <taxon>Betaproteobacteria</taxon>
        <taxon>Burkholderiales</taxon>
        <taxon>Burkholderiaceae</taxon>
        <taxon>Burkholderia</taxon>
        <taxon>Burkholderia cepacia complex</taxon>
        <taxon>Burkholderia orbicola</taxon>
    </lineage>
</organism>
<comment type="function">
    <text evidence="1">One of the primary rRNA binding proteins, it binds specifically to the 5'-end of 16S ribosomal RNA.</text>
</comment>
<comment type="subunit">
    <text evidence="1">Part of the 30S ribosomal subunit.</text>
</comment>
<comment type="similarity">
    <text evidence="1">Belongs to the universal ribosomal protein uS17 family.</text>
</comment>
<protein>
    <recommendedName>
        <fullName evidence="1">Small ribosomal subunit protein uS17</fullName>
    </recommendedName>
    <alternativeName>
        <fullName evidence="2">30S ribosomal protein S17</fullName>
    </alternativeName>
</protein>
<sequence>MNDSVKTSLKRTLVGRVVSNKMDKTVTVLIEHRVKHPIYGKYVVRSKKYHAHDEANTYNEGDLVEIQETRPVSKTKAWTVSRLVEAARVI</sequence>
<keyword id="KW-0687">Ribonucleoprotein</keyword>
<keyword id="KW-0689">Ribosomal protein</keyword>
<keyword id="KW-0694">RNA-binding</keyword>
<keyword id="KW-0699">rRNA-binding</keyword>
<name>RS17_BURO0</name>
<feature type="chain" id="PRO_1000143231" description="Small ribosomal subunit protein uS17">
    <location>
        <begin position="1"/>
        <end position="90"/>
    </location>
</feature>
<gene>
    <name evidence="1" type="primary">rpsQ</name>
    <name type="ordered locus">Bcenmc03_0336</name>
</gene>
<reference key="1">
    <citation type="submission" date="2008-02" db="EMBL/GenBank/DDBJ databases">
        <title>Complete sequence of chromosome 1 of Burkholderia cenocepacia MC0-3.</title>
        <authorList>
            <person name="Copeland A."/>
            <person name="Lucas S."/>
            <person name="Lapidus A."/>
            <person name="Barry K."/>
            <person name="Bruce D."/>
            <person name="Goodwin L."/>
            <person name="Glavina del Rio T."/>
            <person name="Dalin E."/>
            <person name="Tice H."/>
            <person name="Pitluck S."/>
            <person name="Chain P."/>
            <person name="Malfatti S."/>
            <person name="Shin M."/>
            <person name="Vergez L."/>
            <person name="Schmutz J."/>
            <person name="Larimer F."/>
            <person name="Land M."/>
            <person name="Hauser L."/>
            <person name="Kyrpides N."/>
            <person name="Mikhailova N."/>
            <person name="Tiedje J."/>
            <person name="Richardson P."/>
        </authorList>
    </citation>
    <scope>NUCLEOTIDE SEQUENCE [LARGE SCALE GENOMIC DNA]</scope>
    <source>
        <strain>MC0-3</strain>
    </source>
</reference>